<comment type="catalytic activity">
    <reaction evidence="1">
        <text>aldehydo-D-galactose 6-phosphate = keto-D-tagatose 6-phosphate</text>
        <dbReference type="Rhea" id="RHEA:13033"/>
        <dbReference type="ChEBI" id="CHEBI:58255"/>
        <dbReference type="ChEBI" id="CHEBI:134283"/>
        <dbReference type="EC" id="5.3.1.26"/>
    </reaction>
</comment>
<comment type="pathway">
    <text evidence="1">Carbohydrate metabolism; D-galactose 6-phosphate degradation; D-tagatose 6-phosphate from D-galactose 6-phosphate: step 1/1.</text>
</comment>
<comment type="subunit">
    <text evidence="1">Heteromultimeric protein consisting of LacA and LacB.</text>
</comment>
<comment type="similarity">
    <text evidence="1">Belongs to the LacAB/RpiB family.</text>
</comment>
<proteinExistence type="inferred from homology"/>
<organism>
    <name type="scientific">Streptococcus pyogenes serotype M6 (strain ATCC BAA-946 / MGAS10394)</name>
    <dbReference type="NCBI Taxonomy" id="286636"/>
    <lineage>
        <taxon>Bacteria</taxon>
        <taxon>Bacillati</taxon>
        <taxon>Bacillota</taxon>
        <taxon>Bacilli</taxon>
        <taxon>Lactobacillales</taxon>
        <taxon>Streptococcaceae</taxon>
        <taxon>Streptococcus</taxon>
    </lineage>
</organism>
<feature type="chain" id="PRO_0000208162" description="Galactose-6-phosphate isomerase subunit LacB 2">
    <location>
        <begin position="1"/>
        <end position="171"/>
    </location>
</feature>
<sequence>MKIAVGCDHIVTYEKIAVVDYLKSQGHKVIDCGTYDNVRTHYPIFGKKVGEAVASGKAELGVVICGTGVGITNAVNKVPGIRAALVRDMTSAIYSKEELNANVIGFGGKIIGGLLMNDIIDAFLAAEYKPTEENKKWIEKMDSLQHTNQDQNNPHFFDEFLEKWDRGEYHD</sequence>
<protein>
    <recommendedName>
        <fullName evidence="1">Galactose-6-phosphate isomerase subunit LacB 2</fullName>
        <ecNumber evidence="1">5.3.1.26</ecNumber>
    </recommendedName>
</protein>
<gene>
    <name evidence="1" type="primary">lacB2</name>
    <name type="ordered locus">M6_Spy1646</name>
</gene>
<reference key="1">
    <citation type="journal article" date="2004" name="J. Infect. Dis.">
        <title>Progress toward characterization of the group A Streptococcus metagenome: complete genome sequence of a macrolide-resistant serotype M6 strain.</title>
        <authorList>
            <person name="Banks D.J."/>
            <person name="Porcella S.F."/>
            <person name="Barbian K.D."/>
            <person name="Beres S.B."/>
            <person name="Philips L.E."/>
            <person name="Voyich J.M."/>
            <person name="DeLeo F.R."/>
            <person name="Martin J.M."/>
            <person name="Somerville G.A."/>
            <person name="Musser J.M."/>
        </authorList>
    </citation>
    <scope>NUCLEOTIDE SEQUENCE [LARGE SCALE GENOMIC DNA]</scope>
    <source>
        <strain>ATCC BAA-946 / MGAS10394</strain>
    </source>
</reference>
<keyword id="KW-0413">Isomerase</keyword>
<keyword id="KW-0423">Lactose metabolism</keyword>
<accession>Q5X9Y2</accession>
<evidence type="ECO:0000255" key="1">
    <source>
        <dbReference type="HAMAP-Rule" id="MF_01556"/>
    </source>
</evidence>
<name>LACB2_STRP6</name>
<dbReference type="EC" id="5.3.1.26" evidence="1"/>
<dbReference type="EMBL" id="CP000003">
    <property type="protein sequence ID" value="AAT87781.1"/>
    <property type="molecule type" value="Genomic_DNA"/>
</dbReference>
<dbReference type="SMR" id="Q5X9Y2"/>
<dbReference type="KEGG" id="spa:M6_Spy1646"/>
<dbReference type="HOGENOM" id="CLU_091396_2_0_9"/>
<dbReference type="UniPathway" id="UPA00702">
    <property type="reaction ID" value="UER00714"/>
</dbReference>
<dbReference type="Proteomes" id="UP000001167">
    <property type="component" value="Chromosome"/>
</dbReference>
<dbReference type="GO" id="GO:0050044">
    <property type="term" value="F:galactose-6-phosphate isomerase activity"/>
    <property type="evidence" value="ECO:0007669"/>
    <property type="project" value="UniProtKB-UniRule"/>
</dbReference>
<dbReference type="GO" id="GO:0004751">
    <property type="term" value="F:ribose-5-phosphate isomerase activity"/>
    <property type="evidence" value="ECO:0007669"/>
    <property type="project" value="TreeGrafter"/>
</dbReference>
<dbReference type="GO" id="GO:0019316">
    <property type="term" value="P:D-allose catabolic process"/>
    <property type="evidence" value="ECO:0007669"/>
    <property type="project" value="TreeGrafter"/>
</dbReference>
<dbReference type="GO" id="GO:0019388">
    <property type="term" value="P:galactose catabolic process"/>
    <property type="evidence" value="ECO:0007669"/>
    <property type="project" value="UniProtKB-UniPathway"/>
</dbReference>
<dbReference type="GO" id="GO:0019512">
    <property type="term" value="P:lactose catabolic process via tagatose-6-phosphate"/>
    <property type="evidence" value="ECO:0007669"/>
    <property type="project" value="UniProtKB-UniRule"/>
</dbReference>
<dbReference type="GO" id="GO:0009052">
    <property type="term" value="P:pentose-phosphate shunt, non-oxidative branch"/>
    <property type="evidence" value="ECO:0007669"/>
    <property type="project" value="TreeGrafter"/>
</dbReference>
<dbReference type="Gene3D" id="3.40.1400.10">
    <property type="entry name" value="Sugar-phosphate isomerase, RpiB/LacA/LacB"/>
    <property type="match status" value="1"/>
</dbReference>
<dbReference type="HAMAP" id="MF_01556">
    <property type="entry name" value="LacB"/>
    <property type="match status" value="1"/>
</dbReference>
<dbReference type="InterPro" id="IPR004784">
    <property type="entry name" value="LacB"/>
</dbReference>
<dbReference type="InterPro" id="IPR003500">
    <property type="entry name" value="RpiB_LacA_LacB"/>
</dbReference>
<dbReference type="InterPro" id="IPR036569">
    <property type="entry name" value="RpiB_LacA_LacB_sf"/>
</dbReference>
<dbReference type="NCBIfam" id="NF004051">
    <property type="entry name" value="PRK05571.1"/>
    <property type="match status" value="1"/>
</dbReference>
<dbReference type="NCBIfam" id="NF006381">
    <property type="entry name" value="PRK08622.1"/>
    <property type="match status" value="1"/>
</dbReference>
<dbReference type="NCBIfam" id="TIGR00689">
    <property type="entry name" value="rpiB_lacA_lacB"/>
    <property type="match status" value="1"/>
</dbReference>
<dbReference type="PANTHER" id="PTHR30345:SF0">
    <property type="entry name" value="DNA DAMAGE-REPAIR_TOLERATION PROTEIN DRT102"/>
    <property type="match status" value="1"/>
</dbReference>
<dbReference type="PANTHER" id="PTHR30345">
    <property type="entry name" value="RIBOSE-5-PHOSPHATE ISOMERASE B"/>
    <property type="match status" value="1"/>
</dbReference>
<dbReference type="Pfam" id="PF02502">
    <property type="entry name" value="LacAB_rpiB"/>
    <property type="match status" value="1"/>
</dbReference>
<dbReference type="PIRSF" id="PIRSF005384">
    <property type="entry name" value="RpiB_LacA_B"/>
    <property type="match status" value="1"/>
</dbReference>
<dbReference type="SUPFAM" id="SSF89623">
    <property type="entry name" value="Ribose/Galactose isomerase RpiB/AlsB"/>
    <property type="match status" value="1"/>
</dbReference>